<evidence type="ECO:0000255" key="1">
    <source>
        <dbReference type="HAMAP-Rule" id="MF_00700"/>
    </source>
</evidence>
<evidence type="ECO:0000305" key="2"/>
<accession>Q8TXS4</accession>
<comment type="function">
    <text evidence="1">Catalytic subunit of DNA primase, an RNA polymerase that catalyzes the synthesis of short RNA molecules used as primers for DNA polymerase during DNA replication. The small subunit contains the primase catalytic core and has DNA synthesis activity on its own. Binding to the large subunit stabilizes and modulates the activity, increasing the rate of DNA synthesis while decreasing the length of the DNA fragments, and conferring RNA synthesis capability. The DNA polymerase activity may enable DNA primase to also catalyze primer extension after primer synthesis. May also play a role in DNA repair.</text>
</comment>
<comment type="cofactor">
    <cofactor evidence="1">
        <name>Mg(2+)</name>
        <dbReference type="ChEBI" id="CHEBI:18420"/>
    </cofactor>
    <cofactor evidence="1">
        <name>Mn(2+)</name>
        <dbReference type="ChEBI" id="CHEBI:29035"/>
    </cofactor>
</comment>
<comment type="subunit">
    <text evidence="1">Heterodimer of a small subunit (PriS) and a large subunit (PriL).</text>
</comment>
<comment type="similarity">
    <text evidence="1">Belongs to the eukaryotic-type primase small subunit family.</text>
</comment>
<comment type="sequence caution" evidence="2">
    <conflict type="erroneous initiation">
        <sequence resource="EMBL-CDS" id="AAM01801"/>
    </conflict>
    <text>Extended N-terminus.</text>
</comment>
<reference key="1">
    <citation type="journal article" date="2002" name="Proc. Natl. Acad. Sci. U.S.A.">
        <title>The complete genome of hyperthermophile Methanopyrus kandleri AV19 and monophyly of archaeal methanogens.</title>
        <authorList>
            <person name="Slesarev A.I."/>
            <person name="Mezhevaya K.V."/>
            <person name="Makarova K.S."/>
            <person name="Polushin N.N."/>
            <person name="Shcherbinina O.V."/>
            <person name="Shakhova V.V."/>
            <person name="Belova G.I."/>
            <person name="Aravind L."/>
            <person name="Natale D.A."/>
            <person name="Rogozin I.B."/>
            <person name="Tatusov R.L."/>
            <person name="Wolf Y.I."/>
            <person name="Stetter K.O."/>
            <person name="Malykh A.G."/>
            <person name="Koonin E.V."/>
            <person name="Kozyavkin S.A."/>
        </authorList>
    </citation>
    <scope>NUCLEOTIDE SEQUENCE [LARGE SCALE GENOMIC DNA]</scope>
    <source>
        <strain>AV19 / DSM 6324 / JCM 9639 / NBRC 100938</strain>
    </source>
</reference>
<feature type="chain" id="PRO_0000046743" description="DNA primase small subunit PriS">
    <location>
        <begin position="1"/>
        <end position="296"/>
    </location>
</feature>
<feature type="active site" evidence="1">
    <location>
        <position position="82"/>
    </location>
</feature>
<feature type="active site" evidence="1">
    <location>
        <position position="84"/>
    </location>
</feature>
<feature type="active site" evidence="1">
    <location>
        <position position="191"/>
    </location>
</feature>
<keyword id="KW-0235">DNA replication</keyword>
<keyword id="KW-0240">DNA-directed RNA polymerase</keyword>
<keyword id="KW-0460">Magnesium</keyword>
<keyword id="KW-0464">Manganese</keyword>
<keyword id="KW-0479">Metal-binding</keyword>
<keyword id="KW-0548">Nucleotidyltransferase</keyword>
<keyword id="KW-0639">Primosome</keyword>
<keyword id="KW-1185">Reference proteome</keyword>
<keyword id="KW-0804">Transcription</keyword>
<keyword id="KW-0808">Transferase</keyword>
<organism>
    <name type="scientific">Methanopyrus kandleri (strain AV19 / DSM 6324 / JCM 9639 / NBRC 100938)</name>
    <dbReference type="NCBI Taxonomy" id="190192"/>
    <lineage>
        <taxon>Archaea</taxon>
        <taxon>Methanobacteriati</taxon>
        <taxon>Methanobacteriota</taxon>
        <taxon>Methanomada group</taxon>
        <taxon>Methanopyri</taxon>
        <taxon>Methanopyrales</taxon>
        <taxon>Methanopyraceae</taxon>
        <taxon>Methanopyrus</taxon>
    </lineage>
</organism>
<dbReference type="EC" id="2.7.7.-" evidence="1"/>
<dbReference type="EMBL" id="AE009439">
    <property type="protein sequence ID" value="AAM01801.1"/>
    <property type="status" value="ALT_INIT"/>
    <property type="molecule type" value="Genomic_DNA"/>
</dbReference>
<dbReference type="RefSeq" id="WP_148679543.1">
    <property type="nucleotide sequence ID" value="NC_003551.1"/>
</dbReference>
<dbReference type="SMR" id="Q8TXS4"/>
<dbReference type="STRING" id="190192.MK0586"/>
<dbReference type="PaxDb" id="190192-MK0586"/>
<dbReference type="EnsemblBacteria" id="AAM01801">
    <property type="protein sequence ID" value="AAM01801"/>
    <property type="gene ID" value="MK0586"/>
</dbReference>
<dbReference type="GeneID" id="1476687"/>
<dbReference type="KEGG" id="mka:MK0586"/>
<dbReference type="HOGENOM" id="CLU_878822_0_0_2"/>
<dbReference type="InParanoid" id="Q8TXS4"/>
<dbReference type="OrthoDB" id="373040at2157"/>
<dbReference type="Proteomes" id="UP000001826">
    <property type="component" value="Chromosome"/>
</dbReference>
<dbReference type="GO" id="GO:0000428">
    <property type="term" value="C:DNA-directed RNA polymerase complex"/>
    <property type="evidence" value="ECO:0007669"/>
    <property type="project" value="UniProtKB-KW"/>
</dbReference>
<dbReference type="GO" id="GO:1990077">
    <property type="term" value="C:primosome complex"/>
    <property type="evidence" value="ECO:0007669"/>
    <property type="project" value="UniProtKB-KW"/>
</dbReference>
<dbReference type="GO" id="GO:0003899">
    <property type="term" value="F:DNA-directed RNA polymerase activity"/>
    <property type="evidence" value="ECO:0007669"/>
    <property type="project" value="InterPro"/>
</dbReference>
<dbReference type="GO" id="GO:0046872">
    <property type="term" value="F:metal ion binding"/>
    <property type="evidence" value="ECO:0007669"/>
    <property type="project" value="UniProtKB-KW"/>
</dbReference>
<dbReference type="GO" id="GO:0006269">
    <property type="term" value="P:DNA replication, synthesis of primer"/>
    <property type="evidence" value="ECO:0007669"/>
    <property type="project" value="UniProtKB-UniRule"/>
</dbReference>
<dbReference type="Gene3D" id="3.90.920.10">
    <property type="entry name" value="DNA primase, PRIM domain"/>
    <property type="match status" value="1"/>
</dbReference>
<dbReference type="HAMAP" id="MF_00700">
    <property type="entry name" value="DNA_primase_sml_arc"/>
    <property type="match status" value="1"/>
</dbReference>
<dbReference type="InterPro" id="IPR023639">
    <property type="entry name" value="DNA_primase_ssu_PriS"/>
</dbReference>
<dbReference type="SUPFAM" id="SSF56747">
    <property type="entry name" value="Prim-pol domain"/>
    <property type="match status" value="1"/>
</dbReference>
<sequence length="296" mass="33662">MDVKTLVGEYYASLPSGVLREFVEDPSSREWAYTFLKGRDIVFTRKRRLDEVSGFLELYHSTGKFKNPKSWEGLLGWDLVIDVDAELPEEPEAFLKSLGRLLKDVVIACDELRRALGFPRPDVVNFSGSKGFHVRYFDSTVRRWLRWDLHERRGIKPGEIIQRVGRGVVWLAREGFVAGDRVRALREGLLDDSMYDLKRLIRCVGSMNVKSLLPAVPVWSREGGRWVDFRDEVLGMNDLELGCLVAHRTLTWPGRGGLGVVLSRVLDLDTDADPEDPSDFVEVWGNVMSVLGELKP</sequence>
<protein>
    <recommendedName>
        <fullName evidence="1">DNA primase small subunit PriS</fullName>
        <ecNumber evidence="1">2.7.7.-</ecNumber>
    </recommendedName>
</protein>
<name>PRIS_METKA</name>
<proteinExistence type="inferred from homology"/>
<gene>
    <name evidence="1" type="primary">priS</name>
    <name type="synonym">pri1</name>
    <name type="synonym">priA</name>
    <name type="ordered locus">MK0586</name>
</gene>